<feature type="chain" id="PRO_0000292596" description="UDP-glucuronate 4-epimerase 1">
    <location>
        <begin position="1"/>
        <end position="429"/>
    </location>
</feature>
<feature type="transmembrane region" description="Helical" evidence="2">
    <location>
        <begin position="36"/>
        <end position="56"/>
    </location>
</feature>
<feature type="transmembrane region" description="Helical" evidence="2">
    <location>
        <begin position="87"/>
        <end position="107"/>
    </location>
</feature>
<feature type="active site" description="Proton acceptor" evidence="1">
    <location>
        <position position="239"/>
    </location>
</feature>
<feature type="binding site" evidence="1">
    <location>
        <begin position="89"/>
        <end position="120"/>
    </location>
    <ligand>
        <name>NAD(+)</name>
        <dbReference type="ChEBI" id="CHEBI:57540"/>
    </ligand>
</feature>
<keyword id="KW-0119">Carbohydrate metabolism</keyword>
<keyword id="KW-0333">Golgi apparatus</keyword>
<keyword id="KW-0413">Isomerase</keyword>
<keyword id="KW-0472">Membrane</keyword>
<keyword id="KW-0520">NAD</keyword>
<keyword id="KW-1185">Reference proteome</keyword>
<keyword id="KW-0812">Transmembrane</keyword>
<keyword id="KW-1133">Transmembrane helix</keyword>
<name>GAE1_ARATH</name>
<gene>
    <name type="primary">GAE1</name>
    <name type="synonym">UGlcAE3</name>
    <name type="ordered locus">At4g30440</name>
    <name type="ORF">F17I23.220</name>
</gene>
<reference key="1">
    <citation type="journal article" date="2004" name="Plant Physiol.">
        <title>The biosynthesis of D-galacturonate in plants. Functional cloning and characterization of a membrane-anchored UDP-D-glucuronate 4-epimerase from Arabidopsis.</title>
        <authorList>
            <person name="Moelhoej M."/>
            <person name="Verma R."/>
            <person name="Reiter W.-D."/>
        </authorList>
    </citation>
    <scope>NUCLEOTIDE SEQUENCE [GENOMIC DNA]</scope>
    <scope>FUNCTION</scope>
    <scope>CATALYTIC ACTIVITY</scope>
    <scope>TISSUE SPECIFICITY</scope>
    <scope>BIOPHYSICOCHEMICAL PROPERTIES</scope>
    <scope>SUBCELLULAR LOCATION</scope>
</reference>
<reference key="2">
    <citation type="journal article" date="1999" name="Nature">
        <title>Sequence and analysis of chromosome 4 of the plant Arabidopsis thaliana.</title>
        <authorList>
            <person name="Mayer K.F.X."/>
            <person name="Schueller C."/>
            <person name="Wambutt R."/>
            <person name="Murphy G."/>
            <person name="Volckaert G."/>
            <person name="Pohl T."/>
            <person name="Duesterhoeft A."/>
            <person name="Stiekema W."/>
            <person name="Entian K.-D."/>
            <person name="Terryn N."/>
            <person name="Harris B."/>
            <person name="Ansorge W."/>
            <person name="Brandt P."/>
            <person name="Grivell L.A."/>
            <person name="Rieger M."/>
            <person name="Weichselgartner M."/>
            <person name="de Simone V."/>
            <person name="Obermaier B."/>
            <person name="Mache R."/>
            <person name="Mueller M."/>
            <person name="Kreis M."/>
            <person name="Delseny M."/>
            <person name="Puigdomenech P."/>
            <person name="Watson M."/>
            <person name="Schmidtheini T."/>
            <person name="Reichert B."/>
            <person name="Portetelle D."/>
            <person name="Perez-Alonso M."/>
            <person name="Boutry M."/>
            <person name="Bancroft I."/>
            <person name="Vos P."/>
            <person name="Hoheisel J."/>
            <person name="Zimmermann W."/>
            <person name="Wedler H."/>
            <person name="Ridley P."/>
            <person name="Langham S.-A."/>
            <person name="McCullagh B."/>
            <person name="Bilham L."/>
            <person name="Robben J."/>
            <person name="van der Schueren J."/>
            <person name="Grymonprez B."/>
            <person name="Chuang Y.-J."/>
            <person name="Vandenbussche F."/>
            <person name="Braeken M."/>
            <person name="Weltjens I."/>
            <person name="Voet M."/>
            <person name="Bastiaens I."/>
            <person name="Aert R."/>
            <person name="Defoor E."/>
            <person name="Weitzenegger T."/>
            <person name="Bothe G."/>
            <person name="Ramsperger U."/>
            <person name="Hilbert H."/>
            <person name="Braun M."/>
            <person name="Holzer E."/>
            <person name="Brandt A."/>
            <person name="Peters S."/>
            <person name="van Staveren M."/>
            <person name="Dirkse W."/>
            <person name="Mooijman P."/>
            <person name="Klein Lankhorst R."/>
            <person name="Rose M."/>
            <person name="Hauf J."/>
            <person name="Koetter P."/>
            <person name="Berneiser S."/>
            <person name="Hempel S."/>
            <person name="Feldpausch M."/>
            <person name="Lamberth S."/>
            <person name="Van den Daele H."/>
            <person name="De Keyser A."/>
            <person name="Buysshaert C."/>
            <person name="Gielen J."/>
            <person name="Villarroel R."/>
            <person name="De Clercq R."/>
            <person name="van Montagu M."/>
            <person name="Rogers J."/>
            <person name="Cronin A."/>
            <person name="Quail M.A."/>
            <person name="Bray-Allen S."/>
            <person name="Clark L."/>
            <person name="Doggett J."/>
            <person name="Hall S."/>
            <person name="Kay M."/>
            <person name="Lennard N."/>
            <person name="McLay K."/>
            <person name="Mayes R."/>
            <person name="Pettett A."/>
            <person name="Rajandream M.A."/>
            <person name="Lyne M."/>
            <person name="Benes V."/>
            <person name="Rechmann S."/>
            <person name="Borkova D."/>
            <person name="Bloecker H."/>
            <person name="Scharfe M."/>
            <person name="Grimm M."/>
            <person name="Loehnert T.-H."/>
            <person name="Dose S."/>
            <person name="de Haan M."/>
            <person name="Maarse A.C."/>
            <person name="Schaefer M."/>
            <person name="Mueller-Auer S."/>
            <person name="Gabel C."/>
            <person name="Fuchs M."/>
            <person name="Fartmann B."/>
            <person name="Granderath K."/>
            <person name="Dauner D."/>
            <person name="Herzl A."/>
            <person name="Neumann S."/>
            <person name="Argiriou A."/>
            <person name="Vitale D."/>
            <person name="Liguori R."/>
            <person name="Piravandi E."/>
            <person name="Massenet O."/>
            <person name="Quigley F."/>
            <person name="Clabauld G."/>
            <person name="Muendlein A."/>
            <person name="Felber R."/>
            <person name="Schnabl S."/>
            <person name="Hiller R."/>
            <person name="Schmidt W."/>
            <person name="Lecharny A."/>
            <person name="Aubourg S."/>
            <person name="Chefdor F."/>
            <person name="Cooke R."/>
            <person name="Berger C."/>
            <person name="Monfort A."/>
            <person name="Casacuberta E."/>
            <person name="Gibbons T."/>
            <person name="Weber N."/>
            <person name="Vandenbol M."/>
            <person name="Bargues M."/>
            <person name="Terol J."/>
            <person name="Torres A."/>
            <person name="Perez-Perez A."/>
            <person name="Purnelle B."/>
            <person name="Bent E."/>
            <person name="Johnson S."/>
            <person name="Tacon D."/>
            <person name="Jesse T."/>
            <person name="Heijnen L."/>
            <person name="Schwarz S."/>
            <person name="Scholler P."/>
            <person name="Heber S."/>
            <person name="Francs P."/>
            <person name="Bielke C."/>
            <person name="Frishman D."/>
            <person name="Haase D."/>
            <person name="Lemcke K."/>
            <person name="Mewes H.-W."/>
            <person name="Stocker S."/>
            <person name="Zaccaria P."/>
            <person name="Bevan M."/>
            <person name="Wilson R.K."/>
            <person name="de la Bastide M."/>
            <person name="Habermann K."/>
            <person name="Parnell L."/>
            <person name="Dedhia N."/>
            <person name="Gnoj L."/>
            <person name="Schutz K."/>
            <person name="Huang E."/>
            <person name="Spiegel L."/>
            <person name="Sekhon M."/>
            <person name="Murray J."/>
            <person name="Sheet P."/>
            <person name="Cordes M."/>
            <person name="Abu-Threideh J."/>
            <person name="Stoneking T."/>
            <person name="Kalicki J."/>
            <person name="Graves T."/>
            <person name="Harmon G."/>
            <person name="Edwards J."/>
            <person name="Latreille P."/>
            <person name="Courtney L."/>
            <person name="Cloud J."/>
            <person name="Abbott A."/>
            <person name="Scott K."/>
            <person name="Johnson D."/>
            <person name="Minx P."/>
            <person name="Bentley D."/>
            <person name="Fulton B."/>
            <person name="Miller N."/>
            <person name="Greco T."/>
            <person name="Kemp K."/>
            <person name="Kramer J."/>
            <person name="Fulton L."/>
            <person name="Mardis E."/>
            <person name="Dante M."/>
            <person name="Pepin K."/>
            <person name="Hillier L.W."/>
            <person name="Nelson J."/>
            <person name="Spieth J."/>
            <person name="Ryan E."/>
            <person name="Andrews S."/>
            <person name="Geisel C."/>
            <person name="Layman D."/>
            <person name="Du H."/>
            <person name="Ali J."/>
            <person name="Berghoff A."/>
            <person name="Jones K."/>
            <person name="Drone K."/>
            <person name="Cotton M."/>
            <person name="Joshu C."/>
            <person name="Antonoiu B."/>
            <person name="Zidanic M."/>
            <person name="Strong C."/>
            <person name="Sun H."/>
            <person name="Lamar B."/>
            <person name="Yordan C."/>
            <person name="Ma P."/>
            <person name="Zhong J."/>
            <person name="Preston R."/>
            <person name="Vil D."/>
            <person name="Shekher M."/>
            <person name="Matero A."/>
            <person name="Shah R."/>
            <person name="Swaby I.K."/>
            <person name="O'Shaughnessy A."/>
            <person name="Rodriguez M."/>
            <person name="Hoffman J."/>
            <person name="Till S."/>
            <person name="Granat S."/>
            <person name="Shohdy N."/>
            <person name="Hasegawa A."/>
            <person name="Hameed A."/>
            <person name="Lodhi M."/>
            <person name="Johnson A."/>
            <person name="Chen E."/>
            <person name="Marra M.A."/>
            <person name="Martienssen R."/>
            <person name="McCombie W.R."/>
        </authorList>
    </citation>
    <scope>NUCLEOTIDE SEQUENCE [LARGE SCALE GENOMIC DNA]</scope>
    <source>
        <strain>cv. Columbia</strain>
    </source>
</reference>
<reference key="3">
    <citation type="journal article" date="2017" name="Plant J.">
        <title>Araport11: a complete reannotation of the Arabidopsis thaliana reference genome.</title>
        <authorList>
            <person name="Cheng C.Y."/>
            <person name="Krishnakumar V."/>
            <person name="Chan A.P."/>
            <person name="Thibaud-Nissen F."/>
            <person name="Schobel S."/>
            <person name="Town C.D."/>
        </authorList>
    </citation>
    <scope>GENOME REANNOTATION</scope>
    <source>
        <strain>cv. Columbia</strain>
    </source>
</reference>
<reference key="4">
    <citation type="journal article" date="2003" name="Science">
        <title>Empirical analysis of transcriptional activity in the Arabidopsis genome.</title>
        <authorList>
            <person name="Yamada K."/>
            <person name="Lim J."/>
            <person name="Dale J.M."/>
            <person name="Chen H."/>
            <person name="Shinn P."/>
            <person name="Palm C.J."/>
            <person name="Southwick A.M."/>
            <person name="Wu H.C."/>
            <person name="Kim C.J."/>
            <person name="Nguyen M."/>
            <person name="Pham P.K."/>
            <person name="Cheuk R.F."/>
            <person name="Karlin-Newmann G."/>
            <person name="Liu S.X."/>
            <person name="Lam B."/>
            <person name="Sakano H."/>
            <person name="Wu T."/>
            <person name="Yu G."/>
            <person name="Miranda M."/>
            <person name="Quach H.L."/>
            <person name="Tripp M."/>
            <person name="Chang C.H."/>
            <person name="Lee J.M."/>
            <person name="Toriumi M.J."/>
            <person name="Chan M.M."/>
            <person name="Tang C.C."/>
            <person name="Onodera C.S."/>
            <person name="Deng J.M."/>
            <person name="Akiyama K."/>
            <person name="Ansari Y."/>
            <person name="Arakawa T."/>
            <person name="Banh J."/>
            <person name="Banno F."/>
            <person name="Bowser L."/>
            <person name="Brooks S.Y."/>
            <person name="Carninci P."/>
            <person name="Chao Q."/>
            <person name="Choy N."/>
            <person name="Enju A."/>
            <person name="Goldsmith A.D."/>
            <person name="Gurjal M."/>
            <person name="Hansen N.F."/>
            <person name="Hayashizaki Y."/>
            <person name="Johnson-Hopson C."/>
            <person name="Hsuan V.W."/>
            <person name="Iida K."/>
            <person name="Karnes M."/>
            <person name="Khan S."/>
            <person name="Koesema E."/>
            <person name="Ishida J."/>
            <person name="Jiang P.X."/>
            <person name="Jones T."/>
            <person name="Kawai J."/>
            <person name="Kamiya A."/>
            <person name="Meyers C."/>
            <person name="Nakajima M."/>
            <person name="Narusaka M."/>
            <person name="Seki M."/>
            <person name="Sakurai T."/>
            <person name="Satou M."/>
            <person name="Tamse R."/>
            <person name="Vaysberg M."/>
            <person name="Wallender E.K."/>
            <person name="Wong C."/>
            <person name="Yamamura Y."/>
            <person name="Yuan S."/>
            <person name="Shinozaki K."/>
            <person name="Davis R.W."/>
            <person name="Theologis A."/>
            <person name="Ecker J.R."/>
        </authorList>
    </citation>
    <scope>NUCLEOTIDE SEQUENCE [LARGE SCALE MRNA]</scope>
    <source>
        <strain>cv. Columbia</strain>
    </source>
</reference>
<reference key="5">
    <citation type="submission" date="2002-03" db="EMBL/GenBank/DDBJ databases">
        <title>Full-length cDNA from Arabidopsis thaliana.</title>
        <authorList>
            <person name="Brover V.V."/>
            <person name="Troukhan M.E."/>
            <person name="Alexandrov N.A."/>
            <person name="Lu Y.-P."/>
            <person name="Flavell R.B."/>
            <person name="Feldmann K.A."/>
        </authorList>
    </citation>
    <scope>NUCLEOTIDE SEQUENCE [LARGE SCALE MRNA]</scope>
</reference>
<reference key="6">
    <citation type="journal article" date="2001" name="Plant Mol. Biol.">
        <title>Molecular genetics of nucleotide sugar interconversion pathways in plants.</title>
        <authorList>
            <person name="Reiter W.-D."/>
            <person name="Vanzin G.F."/>
        </authorList>
    </citation>
    <scope>IDENTIFICATION</scope>
    <scope>NOMENCLATURE</scope>
</reference>
<reference key="7">
    <citation type="journal article" date="2004" name="FEBS Lett.">
        <title>Identification and characterization of a UDP-D-glucuronate 4-epimerase in Arabidopsis.</title>
        <authorList>
            <person name="Usadel B."/>
            <person name="Schlueter U."/>
            <person name="Moelhoej M."/>
            <person name="Gipmans M."/>
            <person name="Verma R."/>
            <person name="Kossmann J."/>
            <person name="Reiter W.-D."/>
            <person name="Pauly M."/>
        </authorList>
    </citation>
    <scope>TISSUE SPECIFICITY</scope>
</reference>
<reference key="8">
    <citation type="journal article" date="2004" name="Plant Physiol.">
        <title>The biosynthesis of UDP-galacturonic acid in plants. Functional cloning and characterization of Arabidopsis UDP-D-glucuronic acid 4-epimerase.</title>
        <authorList>
            <person name="Gu X."/>
            <person name="Bar-Peled M."/>
        </authorList>
    </citation>
    <scope>IDENTIFICATION</scope>
    <scope>TISSUE SPECIFICITY</scope>
    <scope>NOMENCLATURE</scope>
</reference>
<reference key="9">
    <citation type="journal article" date="2009" name="Plant Physiol.">
        <title>Large-scale Arabidopsis phosphoproteome profiling reveals novel chloroplast kinase substrates and phosphorylation networks.</title>
        <authorList>
            <person name="Reiland S."/>
            <person name="Messerli G."/>
            <person name="Baerenfaller K."/>
            <person name="Gerrits B."/>
            <person name="Endler A."/>
            <person name="Grossmann J."/>
            <person name="Gruissem W."/>
            <person name="Baginsky S."/>
        </authorList>
    </citation>
    <scope>IDENTIFICATION BY MASS SPECTROMETRY [LARGE SCALE ANALYSIS]</scope>
</reference>
<proteinExistence type="evidence at protein level"/>
<evidence type="ECO:0000250" key="1"/>
<evidence type="ECO:0000255" key="2"/>
<evidence type="ECO:0000269" key="3">
    <source>
    </source>
</evidence>
<evidence type="ECO:0000269" key="4">
    <source>
    </source>
</evidence>
<evidence type="ECO:0000269" key="5">
    <source>
    </source>
</evidence>
<evidence type="ECO:0000305" key="6"/>
<dbReference type="EC" id="5.1.3.6" evidence="4"/>
<dbReference type="EMBL" id="AY661562">
    <property type="protein sequence ID" value="AAT77233.1"/>
    <property type="molecule type" value="Genomic_DNA"/>
</dbReference>
<dbReference type="EMBL" id="AL161577">
    <property type="protein sequence ID" value="CAB79762.1"/>
    <property type="molecule type" value="Genomic_DNA"/>
</dbReference>
<dbReference type="EMBL" id="CP002687">
    <property type="protein sequence ID" value="AEE85765.1"/>
    <property type="molecule type" value="Genomic_DNA"/>
</dbReference>
<dbReference type="EMBL" id="AY056303">
    <property type="protein sequence ID" value="AAL07152.1"/>
    <property type="molecule type" value="mRNA"/>
</dbReference>
<dbReference type="EMBL" id="AY099855">
    <property type="protein sequence ID" value="AAM20706.1"/>
    <property type="molecule type" value="mRNA"/>
</dbReference>
<dbReference type="EMBL" id="BT000308">
    <property type="protein sequence ID" value="AAN15627.1"/>
    <property type="molecule type" value="mRNA"/>
</dbReference>
<dbReference type="EMBL" id="AY085505">
    <property type="protein sequence ID" value="AAM62729.1"/>
    <property type="molecule type" value="mRNA"/>
</dbReference>
<dbReference type="PIR" id="A85356">
    <property type="entry name" value="A85356"/>
</dbReference>
<dbReference type="RefSeq" id="NP_194773.1">
    <property type="nucleotide sequence ID" value="NM_119190.4"/>
</dbReference>
<dbReference type="SMR" id="Q9M0B6"/>
<dbReference type="FunCoup" id="Q9M0B6">
    <property type="interactions" value="386"/>
</dbReference>
<dbReference type="STRING" id="3702.Q9M0B6"/>
<dbReference type="iPTMnet" id="Q9M0B6"/>
<dbReference type="SwissPalm" id="Q9M0B6"/>
<dbReference type="PaxDb" id="3702-AT4G30440.1"/>
<dbReference type="ProteomicsDB" id="230470"/>
<dbReference type="EnsemblPlants" id="AT4G30440.1">
    <property type="protein sequence ID" value="AT4G30440.1"/>
    <property type="gene ID" value="AT4G30440"/>
</dbReference>
<dbReference type="GeneID" id="829167"/>
<dbReference type="Gramene" id="AT4G30440.1">
    <property type="protein sequence ID" value="AT4G30440.1"/>
    <property type="gene ID" value="AT4G30440"/>
</dbReference>
<dbReference type="KEGG" id="ath:AT4G30440"/>
<dbReference type="Araport" id="AT4G30440"/>
<dbReference type="TAIR" id="AT4G30440">
    <property type="gene designation" value="GAE1"/>
</dbReference>
<dbReference type="eggNOG" id="KOG1371">
    <property type="taxonomic scope" value="Eukaryota"/>
</dbReference>
<dbReference type="HOGENOM" id="CLU_007383_1_2_1"/>
<dbReference type="InParanoid" id="Q9M0B6"/>
<dbReference type="OMA" id="LHTPYQV"/>
<dbReference type="OrthoDB" id="1055265at2759"/>
<dbReference type="PhylomeDB" id="Q9M0B6"/>
<dbReference type="BRENDA" id="5.1.3.6">
    <property type="organism ID" value="399"/>
</dbReference>
<dbReference type="SABIO-RK" id="Q9M0B6"/>
<dbReference type="CD-CODE" id="4299E36E">
    <property type="entry name" value="Nucleolus"/>
</dbReference>
<dbReference type="PRO" id="PR:Q9M0B6"/>
<dbReference type="Proteomes" id="UP000006548">
    <property type="component" value="Chromosome 4"/>
</dbReference>
<dbReference type="ExpressionAtlas" id="Q9M0B6">
    <property type="expression patterns" value="baseline and differential"/>
</dbReference>
<dbReference type="GO" id="GO:0005768">
    <property type="term" value="C:endosome"/>
    <property type="evidence" value="ECO:0007005"/>
    <property type="project" value="TAIR"/>
</dbReference>
<dbReference type="GO" id="GO:0005794">
    <property type="term" value="C:Golgi apparatus"/>
    <property type="evidence" value="ECO:0000314"/>
    <property type="project" value="TAIR"/>
</dbReference>
<dbReference type="GO" id="GO:0032580">
    <property type="term" value="C:Golgi cisterna membrane"/>
    <property type="evidence" value="ECO:0007669"/>
    <property type="project" value="UniProtKB-SubCell"/>
</dbReference>
<dbReference type="GO" id="GO:0000138">
    <property type="term" value="C:Golgi trans cisterna"/>
    <property type="evidence" value="ECO:0007005"/>
    <property type="project" value="TAIR"/>
</dbReference>
<dbReference type="GO" id="GO:0005802">
    <property type="term" value="C:trans-Golgi network"/>
    <property type="evidence" value="ECO:0007005"/>
    <property type="project" value="TAIR"/>
</dbReference>
<dbReference type="GO" id="GO:0050378">
    <property type="term" value="F:UDP-glucuronate 4-epimerase activity"/>
    <property type="evidence" value="ECO:0000314"/>
    <property type="project" value="TAIR"/>
</dbReference>
<dbReference type="GO" id="GO:0071456">
    <property type="term" value="P:cellular response to hypoxia"/>
    <property type="evidence" value="ECO:0007007"/>
    <property type="project" value="TAIR"/>
</dbReference>
<dbReference type="GO" id="GO:0050832">
    <property type="term" value="P:defense response to fungus"/>
    <property type="evidence" value="ECO:0000316"/>
    <property type="project" value="TAIR"/>
</dbReference>
<dbReference type="GO" id="GO:0050829">
    <property type="term" value="P:defense response to Gram-negative bacterium"/>
    <property type="evidence" value="ECO:0000316"/>
    <property type="project" value="TAIR"/>
</dbReference>
<dbReference type="GO" id="GO:0033481">
    <property type="term" value="P:galacturonate biosynthetic process"/>
    <property type="evidence" value="ECO:0000316"/>
    <property type="project" value="TAIR"/>
</dbReference>
<dbReference type="FunFam" id="3.40.50.720:FF:000198">
    <property type="entry name" value="UDP-glucuronate 4-epimerase 3"/>
    <property type="match status" value="1"/>
</dbReference>
<dbReference type="Gene3D" id="3.40.50.720">
    <property type="entry name" value="NAD(P)-binding Rossmann-like Domain"/>
    <property type="match status" value="1"/>
</dbReference>
<dbReference type="InterPro" id="IPR001509">
    <property type="entry name" value="Epimerase_deHydtase"/>
</dbReference>
<dbReference type="InterPro" id="IPR036291">
    <property type="entry name" value="NAD(P)-bd_dom_sf"/>
</dbReference>
<dbReference type="PANTHER" id="PTHR43574">
    <property type="entry name" value="EPIMERASE-RELATED"/>
    <property type="match status" value="1"/>
</dbReference>
<dbReference type="Pfam" id="PF01370">
    <property type="entry name" value="Epimerase"/>
    <property type="match status" value="1"/>
</dbReference>
<dbReference type="PRINTS" id="PR01713">
    <property type="entry name" value="NUCEPIMERASE"/>
</dbReference>
<dbReference type="SUPFAM" id="SSF51735">
    <property type="entry name" value="NAD(P)-binding Rossmann-fold domains"/>
    <property type="match status" value="1"/>
</dbReference>
<organism>
    <name type="scientific">Arabidopsis thaliana</name>
    <name type="common">Mouse-ear cress</name>
    <dbReference type="NCBI Taxonomy" id="3702"/>
    <lineage>
        <taxon>Eukaryota</taxon>
        <taxon>Viridiplantae</taxon>
        <taxon>Streptophyta</taxon>
        <taxon>Embryophyta</taxon>
        <taxon>Tracheophyta</taxon>
        <taxon>Spermatophyta</taxon>
        <taxon>Magnoliopsida</taxon>
        <taxon>eudicotyledons</taxon>
        <taxon>Gunneridae</taxon>
        <taxon>Pentapetalae</taxon>
        <taxon>rosids</taxon>
        <taxon>malvids</taxon>
        <taxon>Brassicales</taxon>
        <taxon>Brassicaceae</taxon>
        <taxon>Camelineae</taxon>
        <taxon>Arabidopsis</taxon>
    </lineage>
</organism>
<accession>Q9M0B6</accession>
<comment type="function">
    <text evidence="4">UDP-D-glucuronate 4-epimerase involved in the synthesis of the negatively charged monosaccharide that forms the backbone of pectic cell wall components.</text>
</comment>
<comment type="catalytic activity">
    <reaction evidence="4">
        <text>UDP-alpha-D-glucuronate = UDP-alpha-D-galacturonate</text>
        <dbReference type="Rhea" id="RHEA:11404"/>
        <dbReference type="ChEBI" id="CHEBI:57635"/>
        <dbReference type="ChEBI" id="CHEBI:58052"/>
        <dbReference type="EC" id="5.1.3.6"/>
    </reaction>
</comment>
<comment type="activity regulation">
    <text evidence="4">Inhibited by UDP-Xylose.</text>
</comment>
<comment type="biophysicochemical properties">
    <kinetics>
        <KM evidence="4">0.19 mM for UDP-glucuronate</KM>
        <text evidence="4">Equilibrium between UDP-glucuronate and UDP-D-galacturonate established at 1:1.3.</text>
    </kinetics>
    <phDependence>
        <text evidence="4">Optimum pH is 7.6. Active from pH 6 to 8.9.</text>
    </phDependence>
</comment>
<comment type="subunit">
    <text evidence="1">Homodimer.</text>
</comment>
<comment type="subcellular location">
    <subcellularLocation>
        <location evidence="6">Golgi apparatus</location>
        <location evidence="6">Golgi stack membrane</location>
        <topology evidence="6">Multi-pass membrane protein</topology>
    </subcellularLocation>
</comment>
<comment type="tissue specificity">
    <text evidence="3 4 5">In root stele, leaves, siliques, flowers, pollen and stems.</text>
</comment>
<comment type="similarity">
    <text evidence="6">Belongs to the NAD(P)-dependent epimerase/dehydratase family.</text>
</comment>
<sequence>MPSIEDELFPSTPGKFKIDRSNRQLHRCFASTSTMFLWALFLIALTASYLSFQSFVDSGSRYLTASWGGIQWEKQVRTSAQIHRSGGISVLVTGATGFVGSHVSLALRKRGDGVVGLDNFNNYYDPSLKRARRSLLSSRGIFVVEGDLNDAKLLAKLFDVVAFTHVMHLAAQAGVRYALENPQSYVHSNIAGLVNLLEICKAANPQPAIVWASSSSVYGLNEKVPFSESDRTDQPASLYAATKKAGEEITHTYNHIYGLAITGLRFFTVYGPWGRPDMAYFSFTRNILQGKPITIYRGKNRVDLARDFTYIDDIVKGCLGSLDSSGKSTGSGGKKRGAAPYRIFNLGNTSPVTVPILVDILEKHLKVKAKRNFVEMPGNGDVPFTHANISSARNEFGYKPTTDLETGLKKFVRWYLSYYGYNTKAKLVH</sequence>
<protein>
    <recommendedName>
        <fullName>UDP-glucuronate 4-epimerase 1</fullName>
        <ecNumber evidence="4">5.1.3.6</ecNumber>
    </recommendedName>
    <alternativeName>
        <fullName>UDP-glucuronic acid epimerase 1</fullName>
        <shortName>AtUGlcAE3</shortName>
    </alternativeName>
</protein>